<dbReference type="EMBL" id="CP000390">
    <property type="protein sequence ID" value="ABG64556.1"/>
    <property type="molecule type" value="Genomic_DNA"/>
</dbReference>
<dbReference type="SMR" id="Q11DG9"/>
<dbReference type="STRING" id="266779.Meso_3184"/>
<dbReference type="KEGG" id="mes:Meso_3184"/>
<dbReference type="eggNOG" id="COG0231">
    <property type="taxonomic scope" value="Bacteria"/>
</dbReference>
<dbReference type="HOGENOM" id="CLU_074944_1_1_5"/>
<dbReference type="OrthoDB" id="9801844at2"/>
<dbReference type="UniPathway" id="UPA00345"/>
<dbReference type="GO" id="GO:0005737">
    <property type="term" value="C:cytoplasm"/>
    <property type="evidence" value="ECO:0007669"/>
    <property type="project" value="UniProtKB-SubCell"/>
</dbReference>
<dbReference type="GO" id="GO:0003746">
    <property type="term" value="F:translation elongation factor activity"/>
    <property type="evidence" value="ECO:0007669"/>
    <property type="project" value="UniProtKB-UniRule"/>
</dbReference>
<dbReference type="GO" id="GO:0043043">
    <property type="term" value="P:peptide biosynthetic process"/>
    <property type="evidence" value="ECO:0007669"/>
    <property type="project" value="InterPro"/>
</dbReference>
<dbReference type="CDD" id="cd04470">
    <property type="entry name" value="S1_EF-P_repeat_1"/>
    <property type="match status" value="1"/>
</dbReference>
<dbReference type="CDD" id="cd05794">
    <property type="entry name" value="S1_EF-P_repeat_2"/>
    <property type="match status" value="1"/>
</dbReference>
<dbReference type="FunFam" id="2.30.30.30:FF:000003">
    <property type="entry name" value="Elongation factor P"/>
    <property type="match status" value="1"/>
</dbReference>
<dbReference type="FunFam" id="2.40.50.140:FF:000004">
    <property type="entry name" value="Elongation factor P"/>
    <property type="match status" value="1"/>
</dbReference>
<dbReference type="FunFam" id="2.40.50.140:FF:000009">
    <property type="entry name" value="Elongation factor P"/>
    <property type="match status" value="1"/>
</dbReference>
<dbReference type="Gene3D" id="2.30.30.30">
    <property type="match status" value="1"/>
</dbReference>
<dbReference type="Gene3D" id="2.40.50.140">
    <property type="entry name" value="Nucleic acid-binding proteins"/>
    <property type="match status" value="2"/>
</dbReference>
<dbReference type="HAMAP" id="MF_00141">
    <property type="entry name" value="EF_P"/>
    <property type="match status" value="1"/>
</dbReference>
<dbReference type="InterPro" id="IPR015365">
    <property type="entry name" value="Elong-fact-P_C"/>
</dbReference>
<dbReference type="InterPro" id="IPR012340">
    <property type="entry name" value="NA-bd_OB-fold"/>
</dbReference>
<dbReference type="InterPro" id="IPR014722">
    <property type="entry name" value="Rib_uL2_dom2"/>
</dbReference>
<dbReference type="InterPro" id="IPR020599">
    <property type="entry name" value="Transl_elong_fac_P/YeiP"/>
</dbReference>
<dbReference type="InterPro" id="IPR013185">
    <property type="entry name" value="Transl_elong_KOW-like"/>
</dbReference>
<dbReference type="InterPro" id="IPR001059">
    <property type="entry name" value="Transl_elong_P/YeiP_cen"/>
</dbReference>
<dbReference type="InterPro" id="IPR013852">
    <property type="entry name" value="Transl_elong_P/YeiP_CS"/>
</dbReference>
<dbReference type="InterPro" id="IPR011768">
    <property type="entry name" value="Transl_elongation_fac_P"/>
</dbReference>
<dbReference type="InterPro" id="IPR008991">
    <property type="entry name" value="Translation_prot_SH3-like_sf"/>
</dbReference>
<dbReference type="NCBIfam" id="TIGR00038">
    <property type="entry name" value="efp"/>
    <property type="match status" value="1"/>
</dbReference>
<dbReference type="NCBIfam" id="NF001810">
    <property type="entry name" value="PRK00529.1"/>
    <property type="match status" value="1"/>
</dbReference>
<dbReference type="PANTHER" id="PTHR30053">
    <property type="entry name" value="ELONGATION FACTOR P"/>
    <property type="match status" value="1"/>
</dbReference>
<dbReference type="PANTHER" id="PTHR30053:SF14">
    <property type="entry name" value="TRANSLATION ELONGATION FACTOR KOW-LIKE DOMAIN-CONTAINING PROTEIN"/>
    <property type="match status" value="1"/>
</dbReference>
<dbReference type="Pfam" id="PF01132">
    <property type="entry name" value="EFP"/>
    <property type="match status" value="1"/>
</dbReference>
<dbReference type="Pfam" id="PF08207">
    <property type="entry name" value="EFP_N"/>
    <property type="match status" value="1"/>
</dbReference>
<dbReference type="Pfam" id="PF09285">
    <property type="entry name" value="Elong-fact-P_C"/>
    <property type="match status" value="1"/>
</dbReference>
<dbReference type="PIRSF" id="PIRSF005901">
    <property type="entry name" value="EF-P"/>
    <property type="match status" value="1"/>
</dbReference>
<dbReference type="SMART" id="SM01185">
    <property type="entry name" value="EFP"/>
    <property type="match status" value="1"/>
</dbReference>
<dbReference type="SMART" id="SM00841">
    <property type="entry name" value="Elong-fact-P_C"/>
    <property type="match status" value="1"/>
</dbReference>
<dbReference type="SUPFAM" id="SSF50249">
    <property type="entry name" value="Nucleic acid-binding proteins"/>
    <property type="match status" value="2"/>
</dbReference>
<dbReference type="SUPFAM" id="SSF50104">
    <property type="entry name" value="Translation proteins SH3-like domain"/>
    <property type="match status" value="1"/>
</dbReference>
<dbReference type="PROSITE" id="PS01275">
    <property type="entry name" value="EFP"/>
    <property type="match status" value="1"/>
</dbReference>
<comment type="function">
    <text evidence="1">Involved in peptide bond synthesis. Stimulates efficient translation and peptide-bond synthesis on native or reconstituted 70S ribosomes in vitro. Probably functions indirectly by altering the affinity of the ribosome for aminoacyl-tRNA, thus increasing their reactivity as acceptors for peptidyl transferase.</text>
</comment>
<comment type="pathway">
    <text evidence="1">Protein biosynthesis; polypeptide chain elongation.</text>
</comment>
<comment type="subcellular location">
    <subcellularLocation>
        <location evidence="1">Cytoplasm</location>
    </subcellularLocation>
</comment>
<comment type="similarity">
    <text evidence="1">Belongs to the elongation factor P family.</text>
</comment>
<accession>Q11DG9</accession>
<evidence type="ECO:0000255" key="1">
    <source>
        <dbReference type="HAMAP-Rule" id="MF_00141"/>
    </source>
</evidence>
<reference key="1">
    <citation type="submission" date="2006-06" db="EMBL/GenBank/DDBJ databases">
        <title>Complete sequence of chromosome of Mesorhizobium sp. BNC1.</title>
        <authorList>
            <consortium name="US DOE Joint Genome Institute"/>
            <person name="Copeland A."/>
            <person name="Lucas S."/>
            <person name="Lapidus A."/>
            <person name="Barry K."/>
            <person name="Detter J.C."/>
            <person name="Glavina del Rio T."/>
            <person name="Hammon N."/>
            <person name="Israni S."/>
            <person name="Dalin E."/>
            <person name="Tice H."/>
            <person name="Pitluck S."/>
            <person name="Chertkov O."/>
            <person name="Brettin T."/>
            <person name="Bruce D."/>
            <person name="Han C."/>
            <person name="Tapia R."/>
            <person name="Gilna P."/>
            <person name="Schmutz J."/>
            <person name="Larimer F."/>
            <person name="Land M."/>
            <person name="Hauser L."/>
            <person name="Kyrpides N."/>
            <person name="Mikhailova N."/>
            <person name="Richardson P."/>
        </authorList>
    </citation>
    <scope>NUCLEOTIDE SEQUENCE [LARGE SCALE GENOMIC DNA]</scope>
    <source>
        <strain>BNC1</strain>
    </source>
</reference>
<organism>
    <name type="scientific">Chelativorans sp. (strain BNC1)</name>
    <dbReference type="NCBI Taxonomy" id="266779"/>
    <lineage>
        <taxon>Bacteria</taxon>
        <taxon>Pseudomonadati</taxon>
        <taxon>Pseudomonadota</taxon>
        <taxon>Alphaproteobacteria</taxon>
        <taxon>Hyphomicrobiales</taxon>
        <taxon>Phyllobacteriaceae</taxon>
        <taxon>Chelativorans</taxon>
    </lineage>
</organism>
<sequence>MKINGNEIRPGNVIEHNGGLWVAVKTNAVKPGKGGAYNQVELKNLIDGTKLNERFRSAETVEKVRLEQKDFTFLYEQGDALVFMDSETYEQLELQKDFVGDRAAFLQDGMTVTVELYQEKPIGISLPPQVTLQVAEADPVVKGQTAASSYKPAVLENGVRILVPPFVSAGERIVVDTDEITYLRRAD</sequence>
<proteinExistence type="inferred from homology"/>
<protein>
    <recommendedName>
        <fullName evidence="1">Elongation factor P</fullName>
        <shortName evidence="1">EF-P</shortName>
    </recommendedName>
</protein>
<gene>
    <name evidence="1" type="primary">efp</name>
    <name type="ordered locus">Meso_3184</name>
</gene>
<feature type="chain" id="PRO_1000010775" description="Elongation factor P">
    <location>
        <begin position="1"/>
        <end position="187"/>
    </location>
</feature>
<name>EFP_CHESB</name>
<keyword id="KW-0963">Cytoplasm</keyword>
<keyword id="KW-0251">Elongation factor</keyword>
<keyword id="KW-0648">Protein biosynthesis</keyword>